<comment type="function">
    <text evidence="1">Catalyzes the stereoinversion of LL-2,6-diaminopimelate (L,L-DAP) to meso-diaminopimelate (meso-DAP), a precursor of L-lysine and an essential component of the bacterial peptidoglycan.</text>
</comment>
<comment type="catalytic activity">
    <reaction evidence="1">
        <text>(2S,6S)-2,6-diaminopimelate = meso-2,6-diaminopimelate</text>
        <dbReference type="Rhea" id="RHEA:15393"/>
        <dbReference type="ChEBI" id="CHEBI:57609"/>
        <dbReference type="ChEBI" id="CHEBI:57791"/>
        <dbReference type="EC" id="5.1.1.7"/>
    </reaction>
</comment>
<comment type="pathway">
    <text evidence="1">Amino-acid biosynthesis; L-lysine biosynthesis via DAP pathway; DL-2,6-diaminopimelate from LL-2,6-diaminopimelate: step 1/1.</text>
</comment>
<comment type="subunit">
    <text evidence="1">Homodimer.</text>
</comment>
<comment type="subcellular location">
    <subcellularLocation>
        <location evidence="1">Cytoplasm</location>
    </subcellularLocation>
</comment>
<comment type="similarity">
    <text evidence="1">Belongs to the diaminopimelate epimerase family.</text>
</comment>
<dbReference type="EC" id="5.1.1.7" evidence="1"/>
<dbReference type="EMBL" id="AE000516">
    <property type="protein sequence ID" value="AAK47115.1"/>
    <property type="molecule type" value="Genomic_DNA"/>
</dbReference>
<dbReference type="PIR" id="E70505">
    <property type="entry name" value="E70505"/>
</dbReference>
<dbReference type="RefSeq" id="WP_003413987.1">
    <property type="nucleotide sequence ID" value="NZ_KK341227.1"/>
</dbReference>
<dbReference type="SMR" id="P9WP18"/>
<dbReference type="GeneID" id="45426713"/>
<dbReference type="KEGG" id="mtc:MT2798"/>
<dbReference type="PATRIC" id="fig|83331.31.peg.3013"/>
<dbReference type="HOGENOM" id="CLU_053306_4_0_11"/>
<dbReference type="UniPathway" id="UPA00034">
    <property type="reaction ID" value="UER00025"/>
</dbReference>
<dbReference type="Proteomes" id="UP000001020">
    <property type="component" value="Chromosome"/>
</dbReference>
<dbReference type="GO" id="GO:0005829">
    <property type="term" value="C:cytosol"/>
    <property type="evidence" value="ECO:0007669"/>
    <property type="project" value="TreeGrafter"/>
</dbReference>
<dbReference type="GO" id="GO:0008837">
    <property type="term" value="F:diaminopimelate epimerase activity"/>
    <property type="evidence" value="ECO:0007669"/>
    <property type="project" value="UniProtKB-UniRule"/>
</dbReference>
<dbReference type="GO" id="GO:0009089">
    <property type="term" value="P:lysine biosynthetic process via diaminopimelate"/>
    <property type="evidence" value="ECO:0007669"/>
    <property type="project" value="UniProtKB-UniRule"/>
</dbReference>
<dbReference type="Gene3D" id="3.10.310.10">
    <property type="entry name" value="Diaminopimelate Epimerase, Chain A, domain 1"/>
    <property type="match status" value="2"/>
</dbReference>
<dbReference type="HAMAP" id="MF_00197">
    <property type="entry name" value="DAP_epimerase"/>
    <property type="match status" value="1"/>
</dbReference>
<dbReference type="InterPro" id="IPR018510">
    <property type="entry name" value="DAP_epimerase_AS"/>
</dbReference>
<dbReference type="InterPro" id="IPR001653">
    <property type="entry name" value="DAP_epimerase_DapF"/>
</dbReference>
<dbReference type="NCBIfam" id="TIGR00652">
    <property type="entry name" value="DapF"/>
    <property type="match status" value="1"/>
</dbReference>
<dbReference type="PANTHER" id="PTHR31689:SF0">
    <property type="entry name" value="DIAMINOPIMELATE EPIMERASE"/>
    <property type="match status" value="1"/>
</dbReference>
<dbReference type="PANTHER" id="PTHR31689">
    <property type="entry name" value="DIAMINOPIMELATE EPIMERASE, CHLOROPLASTIC"/>
    <property type="match status" value="1"/>
</dbReference>
<dbReference type="Pfam" id="PF01678">
    <property type="entry name" value="DAP_epimerase"/>
    <property type="match status" value="2"/>
</dbReference>
<dbReference type="SUPFAM" id="SSF54506">
    <property type="entry name" value="Diaminopimelate epimerase-like"/>
    <property type="match status" value="2"/>
</dbReference>
<dbReference type="PROSITE" id="PS01326">
    <property type="entry name" value="DAP_EPIMERASE"/>
    <property type="match status" value="1"/>
</dbReference>
<evidence type="ECO:0000255" key="1">
    <source>
        <dbReference type="HAMAP-Rule" id="MF_00197"/>
    </source>
</evidence>
<gene>
    <name evidence="1" type="primary">dapF</name>
    <name type="ordered locus">MT2798</name>
</gene>
<sequence>MIFAKGHGTQNDFVLLPDVDAELVLTAARVAALCDRRKGLGADGVLRVTTAGAAQAVGVLDSLPEGVRVTDWYMDYRNADGSAAQMCGNGVRVFAHYLRASGLEVRDEFVVGSLAGPRPVTCHHVEAAYADVSVDMGKANRLGAGEAVVGGRRFHGLAVDVGNPHLACVDSQLTVDGLAALDVGAPVSFDGAQFPDGVNVEVLTAPVDGAVWMRVHERGVGETRSCGTGTVAAAVAALAAVGSPTGTLTVHVPGGEVVVTVTDATSFLRGPSVLVARGDLADDWWNAMG</sequence>
<keyword id="KW-0028">Amino-acid biosynthesis</keyword>
<keyword id="KW-0963">Cytoplasm</keyword>
<keyword id="KW-0413">Isomerase</keyword>
<keyword id="KW-0457">Lysine biosynthesis</keyword>
<keyword id="KW-1185">Reference proteome</keyword>
<protein>
    <recommendedName>
        <fullName evidence="1">Diaminopimelate epimerase</fullName>
        <shortName evidence="1">DAP epimerase</shortName>
        <ecNumber evidence="1">5.1.1.7</ecNumber>
    </recommendedName>
    <alternativeName>
        <fullName evidence="1">PLP-independent amino acid racemase</fullName>
    </alternativeName>
</protein>
<accession>P9WP18</accession>
<accession>L0TC29</accession>
<accession>O33231</accession>
<accession>P63897</accession>
<reference key="1">
    <citation type="journal article" date="2002" name="J. Bacteriol.">
        <title>Whole-genome comparison of Mycobacterium tuberculosis clinical and laboratory strains.</title>
        <authorList>
            <person name="Fleischmann R.D."/>
            <person name="Alland D."/>
            <person name="Eisen J.A."/>
            <person name="Carpenter L."/>
            <person name="White O."/>
            <person name="Peterson J.D."/>
            <person name="DeBoy R.T."/>
            <person name="Dodson R.J."/>
            <person name="Gwinn M.L."/>
            <person name="Haft D.H."/>
            <person name="Hickey E.K."/>
            <person name="Kolonay J.F."/>
            <person name="Nelson W.C."/>
            <person name="Umayam L.A."/>
            <person name="Ermolaeva M.D."/>
            <person name="Salzberg S.L."/>
            <person name="Delcher A."/>
            <person name="Utterback T.R."/>
            <person name="Weidman J.F."/>
            <person name="Khouri H.M."/>
            <person name="Gill J."/>
            <person name="Mikula A."/>
            <person name="Bishai W."/>
            <person name="Jacobs W.R. Jr."/>
            <person name="Venter J.C."/>
            <person name="Fraser C.M."/>
        </authorList>
    </citation>
    <scope>NUCLEOTIDE SEQUENCE [LARGE SCALE GENOMIC DNA]</scope>
    <source>
        <strain>CDC 1551 / Oshkosh</strain>
    </source>
</reference>
<feature type="chain" id="PRO_0000427029" description="Diaminopimelate epimerase">
    <location>
        <begin position="1"/>
        <end position="289"/>
    </location>
</feature>
<feature type="active site" description="Proton donor" evidence="1">
    <location>
        <position position="87"/>
    </location>
</feature>
<feature type="active site" description="Proton acceptor" evidence="1">
    <location>
        <position position="226"/>
    </location>
</feature>
<feature type="binding site" evidence="1">
    <location>
        <position position="11"/>
    </location>
    <ligand>
        <name>substrate</name>
    </ligand>
</feature>
<feature type="binding site" evidence="1">
    <location>
        <position position="78"/>
    </location>
    <ligand>
        <name>substrate</name>
    </ligand>
</feature>
<feature type="binding site" evidence="1">
    <location>
        <begin position="88"/>
        <end position="89"/>
    </location>
    <ligand>
        <name>substrate</name>
    </ligand>
</feature>
<feature type="binding site" evidence="1">
    <location>
        <position position="163"/>
    </location>
    <ligand>
        <name>substrate</name>
    </ligand>
</feature>
<feature type="binding site" evidence="1">
    <location>
        <position position="199"/>
    </location>
    <ligand>
        <name>substrate</name>
    </ligand>
</feature>
<feature type="binding site" evidence="1">
    <location>
        <begin position="217"/>
        <end position="218"/>
    </location>
    <ligand>
        <name>substrate</name>
    </ligand>
</feature>
<feature type="binding site" evidence="1">
    <location>
        <begin position="227"/>
        <end position="228"/>
    </location>
    <ligand>
        <name>substrate</name>
    </ligand>
</feature>
<feature type="site" description="Could be important to modulate the pK values of the two catalytic cysteine residues" evidence="1">
    <location>
        <position position="165"/>
    </location>
</feature>
<feature type="site" description="Could be important to modulate the pK values of the two catalytic cysteine residues" evidence="1">
    <location>
        <position position="217"/>
    </location>
</feature>
<proteinExistence type="inferred from homology"/>
<organism>
    <name type="scientific">Mycobacterium tuberculosis (strain CDC 1551 / Oshkosh)</name>
    <dbReference type="NCBI Taxonomy" id="83331"/>
    <lineage>
        <taxon>Bacteria</taxon>
        <taxon>Bacillati</taxon>
        <taxon>Actinomycetota</taxon>
        <taxon>Actinomycetes</taxon>
        <taxon>Mycobacteriales</taxon>
        <taxon>Mycobacteriaceae</taxon>
        <taxon>Mycobacterium</taxon>
        <taxon>Mycobacterium tuberculosis complex</taxon>
    </lineage>
</organism>
<name>DAPF_MYCTO</name>